<name>PEPX_LACDL</name>
<accession>P40334</accession>
<proteinExistence type="evidence at protein level"/>
<feature type="chain" id="PRO_0000220218" description="Xaa-Pro dipeptidyl-peptidase">
    <location>
        <begin position="1"/>
        <end position="792"/>
    </location>
</feature>
<feature type="active site" description="Charge relay system" evidence="1">
    <location>
        <position position="363"/>
    </location>
</feature>
<feature type="active site" description="Charge relay system" evidence="1">
    <location>
        <position position="482"/>
    </location>
</feature>
<feature type="active site" description="Charge relay system" evidence="1">
    <location>
        <position position="513"/>
    </location>
</feature>
<organism>
    <name type="scientific">Lactobacillus delbrueckii subsp. lactis</name>
    <dbReference type="NCBI Taxonomy" id="29397"/>
    <lineage>
        <taxon>Bacteria</taxon>
        <taxon>Bacillati</taxon>
        <taxon>Bacillota</taxon>
        <taxon>Bacilli</taxon>
        <taxon>Lactobacillales</taxon>
        <taxon>Lactobacillaceae</taxon>
        <taxon>Lactobacillus</taxon>
    </lineage>
</organism>
<sequence>MKYNQYAYVETSPEKATEELLAINFLPENYSSLSFSELLAVLTGNVLAEATTRQAKDAKLAEFAVDDQTDLAAFLLDTPTAITASQFANVALQLLGYHPNYDYSLTDPLTCGKKHALPAFKDLTSKEELIFTFYRLLNTRSKNGQILLDVMAGKGYFTQFWGEGKFMFFNGKSLPVFDTSQVIREVVYVQSDLDTDGDGKGDLLPVTVFRPVESQDQLKVPALYTASPYFGGIIDNVKTNHNVDENLTDATTWTNPKYVAKPLVKSPAPSDQDVPATELATGQSSYGLNEYLLARGFASVFSGAIGNRHGDGIRITGSPEETISQKEVIEWLTGDRVAYTDRTRRFETKASWCSGNVGMTGRSYLGTLQIAIATTGVKGLKTVVSEAAISSWYDYYREHGLVVAPSECQGEDMDKLAEVCQSNLWDGGNFTAKKAYEAEQAELLAAQDRATGQYSDFWESRNYRHHTDGIKCSWISVHGLNDWNVKPKNVYKIWQKVKQLPVKSHLFLHQGPHYNMNNLVSIDFTDLMNLWFVHELLEVENGAYEQWPKVMIQDNLEADEWHAESDWASDLGQASLYLPTADGDLSTVENGTGQLTFTDLGGTEFKKAGISETDWEYQFISGEEKWAKASLRFESEEFLHPTTLVGRPKVRVRVAANKTVGQLSVALVDLGTRQRLTATPKIFARGNQPFGYRFGADSLQEFVPDKATKAKLITKAHMNLQNYQDMKQPSKLEAGQFVDLEFELQPTYYTLPAGAKLGLIIYSTDQGMTKRPLETEDYTVDLAGTALLLYRK</sequence>
<keyword id="KW-0031">Aminopeptidase</keyword>
<keyword id="KW-0963">Cytoplasm</keyword>
<keyword id="KW-0903">Direct protein sequencing</keyword>
<keyword id="KW-0378">Hydrolase</keyword>
<keyword id="KW-0645">Protease</keyword>
<keyword id="KW-0720">Serine protease</keyword>
<reference key="1">
    <citation type="journal article" date="1993" name="Appl. Microbiol. Biotechnol.">
        <title>Cloning and sequence analysis of the X-prolyl-dipeptidyl-aminopeptidase gene (pepX) from Lactobacillus delbruckii ssp. lactis DSM7290.</title>
        <authorList>
            <person name="Meyer-Barton E.C."/>
            <person name="Klein J.R."/>
            <person name="Imam M."/>
            <person name="Plapp R."/>
        </authorList>
    </citation>
    <scope>NUCLEOTIDE SEQUENCE [GENOMIC DNA]</scope>
    <scope>PROTEIN SEQUENCE OF 1-10</scope>
    <source>
        <strain>DSM 7290 / WS87</strain>
    </source>
</reference>
<gene>
    <name type="primary">pepX</name>
</gene>
<evidence type="ECO:0000250" key="1"/>
<evidence type="ECO:0000305" key="2"/>
<comment type="function">
    <text>Removes N-terminal dipeptides sequentially from polypeptides having unsubstituted N-termini provided that the penultimate residue is proline.</text>
</comment>
<comment type="catalytic activity">
    <reaction>
        <text>Hydrolyzes Xaa-Pro-|- bonds to release unblocked, N-terminal dipeptides from substrates including Ala-Pro-|-p-nitroanilide and (sequentially) Tyr-Pro-|-Phe-Pro-|-Gly-Pro-|-Ile.</text>
        <dbReference type="EC" id="3.4.14.11"/>
    </reaction>
</comment>
<comment type="biophysicochemical properties">
    <phDependence>
        <text>Optimum pH is 7.0.</text>
    </phDependence>
    <temperatureDependence>
        <text>Optimum temperature is 46-50 degrees Celsius.</text>
    </temperatureDependence>
</comment>
<comment type="subunit">
    <text evidence="1">Homodimer.</text>
</comment>
<comment type="subcellular location">
    <subcellularLocation>
        <location evidence="1">Cytoplasm</location>
    </subcellularLocation>
</comment>
<comment type="similarity">
    <text evidence="2">Belongs to the peptidase S15 family.</text>
</comment>
<dbReference type="EC" id="3.4.14.11"/>
<dbReference type="EMBL" id="Z14230">
    <property type="protein sequence ID" value="CAA78597.1"/>
    <property type="molecule type" value="Genomic_DNA"/>
</dbReference>
<dbReference type="PIR" id="S32244">
    <property type="entry name" value="S32244"/>
</dbReference>
<dbReference type="RefSeq" id="WP_070488955.1">
    <property type="nucleotide sequence ID" value="NZ_CP046131.1"/>
</dbReference>
<dbReference type="SMR" id="P40334"/>
<dbReference type="ESTHER" id="lacdl-pepx">
    <property type="family name" value="Lactobacillus_peptidase"/>
</dbReference>
<dbReference type="MEROPS" id="S15.001"/>
<dbReference type="GO" id="GO:0005737">
    <property type="term" value="C:cytoplasm"/>
    <property type="evidence" value="ECO:0007669"/>
    <property type="project" value="UniProtKB-SubCell"/>
</dbReference>
<dbReference type="GO" id="GO:0004177">
    <property type="term" value="F:aminopeptidase activity"/>
    <property type="evidence" value="ECO:0007669"/>
    <property type="project" value="UniProtKB-KW"/>
</dbReference>
<dbReference type="GO" id="GO:0008239">
    <property type="term" value="F:dipeptidyl-peptidase activity"/>
    <property type="evidence" value="ECO:0007669"/>
    <property type="project" value="UniProtKB-UniRule"/>
</dbReference>
<dbReference type="GO" id="GO:0008236">
    <property type="term" value="F:serine-type peptidase activity"/>
    <property type="evidence" value="ECO:0007669"/>
    <property type="project" value="UniProtKB-KW"/>
</dbReference>
<dbReference type="GO" id="GO:0006508">
    <property type="term" value="P:proteolysis"/>
    <property type="evidence" value="ECO:0007669"/>
    <property type="project" value="UniProtKB-KW"/>
</dbReference>
<dbReference type="Gene3D" id="1.10.246.70">
    <property type="match status" value="1"/>
</dbReference>
<dbReference type="Gene3D" id="3.40.50.1820">
    <property type="entry name" value="alpha/beta hydrolase"/>
    <property type="match status" value="1"/>
</dbReference>
<dbReference type="Gene3D" id="2.60.120.260">
    <property type="entry name" value="Galactose-binding domain-like"/>
    <property type="match status" value="1"/>
</dbReference>
<dbReference type="HAMAP" id="MF_00698">
    <property type="entry name" value="Aminopeptidase_S15"/>
    <property type="match status" value="1"/>
</dbReference>
<dbReference type="InterPro" id="IPR029058">
    <property type="entry name" value="AB_hydrolase_fold"/>
</dbReference>
<dbReference type="InterPro" id="IPR008979">
    <property type="entry name" value="Galactose-bd-like_sf"/>
</dbReference>
<dbReference type="InterPro" id="IPR008252">
    <property type="entry name" value="Pept_S15_Xpro"/>
</dbReference>
<dbReference type="InterPro" id="IPR015251">
    <property type="entry name" value="PepX_N_dom"/>
</dbReference>
<dbReference type="InterPro" id="IPR036313">
    <property type="entry name" value="PepX_N_dom_sf"/>
</dbReference>
<dbReference type="InterPro" id="IPR000383">
    <property type="entry name" value="Xaa-Pro-like_dom"/>
</dbReference>
<dbReference type="InterPro" id="IPR013736">
    <property type="entry name" value="Xaa-Pro_dipept_C"/>
</dbReference>
<dbReference type="NCBIfam" id="NF003781">
    <property type="entry name" value="PRK05371.1-2"/>
    <property type="match status" value="1"/>
</dbReference>
<dbReference type="Pfam" id="PF02129">
    <property type="entry name" value="Peptidase_S15"/>
    <property type="match status" value="1"/>
</dbReference>
<dbReference type="Pfam" id="PF08530">
    <property type="entry name" value="PepX_C"/>
    <property type="match status" value="1"/>
</dbReference>
<dbReference type="Pfam" id="PF09168">
    <property type="entry name" value="PepX_N"/>
    <property type="match status" value="1"/>
</dbReference>
<dbReference type="PRINTS" id="PR00923">
    <property type="entry name" value="LACTOPTASE"/>
</dbReference>
<dbReference type="SMART" id="SM00939">
    <property type="entry name" value="PepX_C"/>
    <property type="match status" value="1"/>
</dbReference>
<dbReference type="SMART" id="SM00940">
    <property type="entry name" value="PepX_N"/>
    <property type="match status" value="1"/>
</dbReference>
<dbReference type="SUPFAM" id="SSF53474">
    <property type="entry name" value="alpha/beta-Hydrolases"/>
    <property type="match status" value="1"/>
</dbReference>
<dbReference type="SUPFAM" id="SSF49785">
    <property type="entry name" value="Galactose-binding domain-like"/>
    <property type="match status" value="1"/>
</dbReference>
<dbReference type="SUPFAM" id="SSF81761">
    <property type="entry name" value="X-Prolyl dipeptidyl aminopeptidase PepX, N-terminal domain"/>
    <property type="match status" value="1"/>
</dbReference>
<protein>
    <recommendedName>
        <fullName>Xaa-Pro dipeptidyl-peptidase</fullName>
        <ecNumber>3.4.14.11</ecNumber>
    </recommendedName>
    <alternativeName>
        <fullName>X-Pro dipeptidyl-peptidase</fullName>
    </alternativeName>
    <alternativeName>
        <fullName>X-prolyl-dipeptidyl aminopeptidase</fullName>
        <shortName>X-PDAP</shortName>
    </alternativeName>
</protein>